<gene>
    <name type="primary">los1</name>
    <name type="ORF">An07g03150</name>
</gene>
<keyword id="KW-0963">Cytoplasm</keyword>
<keyword id="KW-0539">Nucleus</keyword>
<keyword id="KW-1185">Reference proteome</keyword>
<keyword id="KW-0694">RNA-binding</keyword>
<keyword id="KW-0813">Transport</keyword>
<keyword id="KW-0819">tRNA processing</keyword>
<keyword id="KW-0820">tRNA-binding</keyword>
<comment type="function">
    <text evidence="1">tRNA nucleus export receptor which facilitates tRNA translocation across the nuclear pore complex. Involved in pre-tRNA splicing, probably by affecting the interaction of pre-tRNA with splicing endonuclease (By similarity).</text>
</comment>
<comment type="subcellular location">
    <subcellularLocation>
        <location evidence="1">Nucleus</location>
    </subcellularLocation>
    <subcellularLocation>
        <location evidence="1">Cytoplasm</location>
    </subcellularLocation>
    <text evidence="1">Shuttles between the nucleus and the cytoplasm.</text>
</comment>
<comment type="similarity">
    <text evidence="2">Belongs to the exportin family.</text>
</comment>
<dbReference type="EMBL" id="AM270126">
    <property type="protein sequence ID" value="CAL00249.1"/>
    <property type="molecule type" value="Genomic_DNA"/>
</dbReference>
<dbReference type="RefSeq" id="XP_001391398.1">
    <property type="nucleotide sequence ID" value="XM_001391361.2"/>
</dbReference>
<dbReference type="SMR" id="A2QMS5"/>
<dbReference type="EnsemblFungi" id="CAL00249">
    <property type="protein sequence ID" value="CAL00249"/>
    <property type="gene ID" value="An07g03150"/>
</dbReference>
<dbReference type="GeneID" id="4981582"/>
<dbReference type="KEGG" id="ang:An07g03150"/>
<dbReference type="VEuPathDB" id="FungiDB:An07g03150"/>
<dbReference type="HOGENOM" id="CLU_004414_0_1_1"/>
<dbReference type="Proteomes" id="UP000006706">
    <property type="component" value="Chromosome 4L"/>
</dbReference>
<dbReference type="GO" id="GO:0005737">
    <property type="term" value="C:cytoplasm"/>
    <property type="evidence" value="ECO:0007669"/>
    <property type="project" value="UniProtKB-SubCell"/>
</dbReference>
<dbReference type="GO" id="GO:0016363">
    <property type="term" value="C:nuclear matrix"/>
    <property type="evidence" value="ECO:0007669"/>
    <property type="project" value="TreeGrafter"/>
</dbReference>
<dbReference type="GO" id="GO:0005643">
    <property type="term" value="C:nuclear pore"/>
    <property type="evidence" value="ECO:0007669"/>
    <property type="project" value="TreeGrafter"/>
</dbReference>
<dbReference type="GO" id="GO:0031267">
    <property type="term" value="F:small GTPase binding"/>
    <property type="evidence" value="ECO:0007669"/>
    <property type="project" value="InterPro"/>
</dbReference>
<dbReference type="GO" id="GO:0000049">
    <property type="term" value="F:tRNA binding"/>
    <property type="evidence" value="ECO:0007669"/>
    <property type="project" value="UniProtKB-KW"/>
</dbReference>
<dbReference type="GO" id="GO:0008033">
    <property type="term" value="P:tRNA processing"/>
    <property type="evidence" value="ECO:0007669"/>
    <property type="project" value="UniProtKB-KW"/>
</dbReference>
<dbReference type="GO" id="GO:0071528">
    <property type="term" value="P:tRNA re-export from nucleus"/>
    <property type="evidence" value="ECO:0007669"/>
    <property type="project" value="InterPro"/>
</dbReference>
<dbReference type="FunFam" id="1.25.10.10:FF:000355">
    <property type="entry name" value="Exportin-T"/>
    <property type="match status" value="1"/>
</dbReference>
<dbReference type="Gene3D" id="1.25.10.10">
    <property type="entry name" value="Leucine-rich Repeat Variant"/>
    <property type="match status" value="1"/>
</dbReference>
<dbReference type="InterPro" id="IPR011989">
    <property type="entry name" value="ARM-like"/>
</dbReference>
<dbReference type="InterPro" id="IPR016024">
    <property type="entry name" value="ARM-type_fold"/>
</dbReference>
<dbReference type="InterPro" id="IPR013598">
    <property type="entry name" value="Exportin-1/Importin-b-like"/>
</dbReference>
<dbReference type="InterPro" id="IPR045546">
    <property type="entry name" value="Exportin-T_C"/>
</dbReference>
<dbReference type="InterPro" id="IPR040017">
    <property type="entry name" value="XPOT"/>
</dbReference>
<dbReference type="PANTHER" id="PTHR15952:SF11">
    <property type="entry name" value="EXPORTIN-T"/>
    <property type="match status" value="1"/>
</dbReference>
<dbReference type="PANTHER" id="PTHR15952">
    <property type="entry name" value="EXPORTIN-T/LOS1"/>
    <property type="match status" value="1"/>
</dbReference>
<dbReference type="Pfam" id="PF19282">
    <property type="entry name" value="Exportin-T"/>
    <property type="match status" value="1"/>
</dbReference>
<dbReference type="Pfam" id="PF08389">
    <property type="entry name" value="Xpo1"/>
    <property type="match status" value="1"/>
</dbReference>
<dbReference type="SUPFAM" id="SSF48371">
    <property type="entry name" value="ARM repeat"/>
    <property type="match status" value="1"/>
</dbReference>
<evidence type="ECO:0000250" key="1"/>
<evidence type="ECO:0000305" key="2"/>
<accession>A2QMS5</accession>
<sequence length="1030" mass="114779">MEEQVANAIEIAGNPTSDQTLKAQAFDYLNQLRTDPSGWQVCLTLFTKTPQYSEIIRHVALEVVNSAAQAGLIDPQALGYVRDGLMAYLRQVYGQDNVTPDSTSIQNKIAQTITFLFSALYGNGWETFFDDLLSLTYKSSASTSHDNPLGIVFYLRVINAIHEEIGDVLVSRSRTEQDKANLLKDLIRSRDMQKIASSWQQILSEWRDGNDTIVEMSLRAVGSWVSWIDIGLVVNQTTLDLLFQQLGRAQKAELREGEEKVRDAAVDVFTEIIGKKMKPEDKMDMIIFLNLDTIVTQLSNSPPLHENRFTFKYDTDLAETVAKLVNITVIDIVRALEQDTVTADCKAKATGLLQAFLPHILRYFSDEYDEVCSTVIPCVSDLLSYLRKIAKVNPALAEQHSSILLPILKAIIAKMRYDETSSWGDEDDQTDEAEFQELRKRLGVLQQIVASVNEQLCMEAVSEVVGNTFESLRQSGAQLDWRDLDLALHEMFLFGEVAVRAGSLYSKGVPNNAAAERLVEMMLKMVESDIRSFTHPATQLQYMEICVRYSSFFQYHTHLIPTVLESFLQLVHHPIKKVKTRSWYLFQRLVKQLRTHVGNVAQTVVEALGDLLVINAELPTEGSDGDEMSSEDHEGSADAVFNSQLYLFEAVGIICSTPTVPADKQVLYAQSVLNPVFMDMEKNLAPAKANDERALLQIHHDIMALGTLARGFSDWMPGTSSPASLPAPEVSEAFMQVSEATLVALESLKTSFNVRTAARFAFSRLIGVLGSRILPQLPRWIDGLLTQTSSRDEMALFLRLLDQVIFGFKSEIYSILDALLTPFLQRVFSGIADAPTGTDDEVQLAELKREYLNFLLAVLNNELGAVIISERNQPMFETVIGTIEHFAKDIEDFTTAKMAFSVLSKMGSSWGGPDITPEGANGAAPQQQALPGFGQFMITRLSPLCWALPATPSFNSKDAQAKQVLAEAGGLQRTIYAKTGMEYLQYLRDRELPGMGMGADLVEEFVGALGRLDMKGFRQFFPSFIQRLSA</sequence>
<protein>
    <recommendedName>
        <fullName>Exportin-T</fullName>
    </recommendedName>
    <alternativeName>
        <fullName>Exportin(tRNA)</fullName>
    </alternativeName>
    <alternativeName>
        <fullName>Karyopherin-beta</fullName>
    </alternativeName>
    <alternativeName>
        <fullName>tRNA exportin</fullName>
    </alternativeName>
</protein>
<feature type="chain" id="PRO_0000343082" description="Exportin-T">
    <location>
        <begin position="1"/>
        <end position="1030"/>
    </location>
</feature>
<name>XPOT_ASPNC</name>
<reference key="1">
    <citation type="journal article" date="2007" name="Nat. Biotechnol.">
        <title>Genome sequencing and analysis of the versatile cell factory Aspergillus niger CBS 513.88.</title>
        <authorList>
            <person name="Pel H.J."/>
            <person name="de Winde J.H."/>
            <person name="Archer D.B."/>
            <person name="Dyer P.S."/>
            <person name="Hofmann G."/>
            <person name="Schaap P.J."/>
            <person name="Turner G."/>
            <person name="de Vries R.P."/>
            <person name="Albang R."/>
            <person name="Albermann K."/>
            <person name="Andersen M.R."/>
            <person name="Bendtsen J.D."/>
            <person name="Benen J.A.E."/>
            <person name="van den Berg M."/>
            <person name="Breestraat S."/>
            <person name="Caddick M.X."/>
            <person name="Contreras R."/>
            <person name="Cornell M."/>
            <person name="Coutinho P.M."/>
            <person name="Danchin E.G.J."/>
            <person name="Debets A.J.M."/>
            <person name="Dekker P."/>
            <person name="van Dijck P.W.M."/>
            <person name="van Dijk A."/>
            <person name="Dijkhuizen L."/>
            <person name="Driessen A.J.M."/>
            <person name="d'Enfert C."/>
            <person name="Geysens S."/>
            <person name="Goosen C."/>
            <person name="Groot G.S.P."/>
            <person name="de Groot P.W.J."/>
            <person name="Guillemette T."/>
            <person name="Henrissat B."/>
            <person name="Herweijer M."/>
            <person name="van den Hombergh J.P.T.W."/>
            <person name="van den Hondel C.A.M.J.J."/>
            <person name="van der Heijden R.T.J.M."/>
            <person name="van der Kaaij R.M."/>
            <person name="Klis F.M."/>
            <person name="Kools H.J."/>
            <person name="Kubicek C.P."/>
            <person name="van Kuyk P.A."/>
            <person name="Lauber J."/>
            <person name="Lu X."/>
            <person name="van der Maarel M.J.E.C."/>
            <person name="Meulenberg R."/>
            <person name="Menke H."/>
            <person name="Mortimer M.A."/>
            <person name="Nielsen J."/>
            <person name="Oliver S.G."/>
            <person name="Olsthoorn M."/>
            <person name="Pal K."/>
            <person name="van Peij N.N.M.E."/>
            <person name="Ram A.F.J."/>
            <person name="Rinas U."/>
            <person name="Roubos J.A."/>
            <person name="Sagt C.M.J."/>
            <person name="Schmoll M."/>
            <person name="Sun J."/>
            <person name="Ussery D."/>
            <person name="Varga J."/>
            <person name="Vervecken W."/>
            <person name="van de Vondervoort P.J.J."/>
            <person name="Wedler H."/>
            <person name="Woesten H.A.B."/>
            <person name="Zeng A.-P."/>
            <person name="van Ooyen A.J.J."/>
            <person name="Visser J."/>
            <person name="Stam H."/>
        </authorList>
    </citation>
    <scope>NUCLEOTIDE SEQUENCE [LARGE SCALE GENOMIC DNA]</scope>
    <source>
        <strain>ATCC MYA-4892 / CBS 513.88 / FGSC A1513</strain>
    </source>
</reference>
<organism>
    <name type="scientific">Aspergillus niger (strain ATCC MYA-4892 / CBS 513.88 / FGSC A1513)</name>
    <dbReference type="NCBI Taxonomy" id="425011"/>
    <lineage>
        <taxon>Eukaryota</taxon>
        <taxon>Fungi</taxon>
        <taxon>Dikarya</taxon>
        <taxon>Ascomycota</taxon>
        <taxon>Pezizomycotina</taxon>
        <taxon>Eurotiomycetes</taxon>
        <taxon>Eurotiomycetidae</taxon>
        <taxon>Eurotiales</taxon>
        <taxon>Aspergillaceae</taxon>
        <taxon>Aspergillus</taxon>
        <taxon>Aspergillus subgen. Circumdati</taxon>
    </lineage>
</organism>
<proteinExistence type="inferred from homology"/>